<proteinExistence type="inferred from homology"/>
<sequence length="1058" mass="116501">MPKRKDIQKIMVIGSGPIIIGQAAEFDYAGTQACLALKEEGYKVILVNSNPATIMTDKEIADKVYIEPLTLEFVNRIIRKERPDAILPTLGGQTGLNMAMALSKAGILDDLEIELLGTKLSAIDQAEDRDLFKQLMQELDQPIPESTIVKTVDEAVTFARDIGYPVIVRPAFTLGGTGGGICSSEEELCEITENGLKLSPVTQCLIERSIAGFKEIEYEVMRDSADNALVVCNMENFDPVGIHTGDSIVFAPTQTLSDIENQMLRDASLKIIRALKIEGGCNVQLALDPYSFKYYVIEVNPRVSRSSALASKATGYPIAKLAAKIAVGLTLDEMINPITGTTYAMFEPALDYVVAKIPRFPFDKFEHGERQLGTQMKATGEVMAIGRNLEESLLKACRSLEIGVCHNEMTSLSNISDEELVTKVIKAQDDRLFYLSEAIRRGYSIEELESLTKIDLFFLDKLLHIVEIEQELQMHVDHLESLKKAKRYGFSDQKIAEIWQKDESDIRAMRHSHSLYPVYKMVDTCAAEFDAKTPYFYSTYELENESVQSNKESILVLGSGPIRIGQGVEFDYATVHSVKAIQKAGYEAIIMNSNPETVSTDFSVSDKLYFEPLTFEDVMNVIDLEQPKGVIVQFGGQTAINLAQALSEAGVTILGTQVEDLDRAEDRDLFEKALKELGIPQPQGQTATNEEEALEAAKKIGFPVLVRPSYVLGGRAMEIVENKEDLREYIRTAVKASPEHPILVDSYIFGKECEVDAISDGKSVLIPGIMEHIERAGVHSGDSMAVYPPQQLSKQIQETIAEYTKRLAIGLNCIGMMNVQFVIKNEQVYVIEVNPRASRTVPFLSKVTGIPMAQIATKLILGQTLKDLGYEDGLYPQSPLVHIKAPVFSFTKLAQVDSLLGPEMKSTGEVMGSDTSLEKALYKAFEANNSHLSEFGQIVFTIADDSKAEALSLARRFKAIGYQIMATQGTAAYFAEQGLSACLVGKIGDAANDIPTLVRHGHVQAIVNTVGIKRTADKDGQMIRSSAIEQGVPLFTALDTAKAMLTVLESRCFNIEAI</sequence>
<organism>
    <name type="scientific">Streptococcus pyogenes serotype M1</name>
    <dbReference type="NCBI Taxonomy" id="301447"/>
    <lineage>
        <taxon>Bacteria</taxon>
        <taxon>Bacillati</taxon>
        <taxon>Bacillota</taxon>
        <taxon>Bacilli</taxon>
        <taxon>Lactobacillales</taxon>
        <taxon>Streptococcaceae</taxon>
        <taxon>Streptococcus</taxon>
    </lineage>
</organism>
<feature type="chain" id="PRO_0000145053" description="Carbamoyl phosphate synthase large chain">
    <location>
        <begin position="1"/>
        <end position="1058"/>
    </location>
</feature>
<feature type="domain" description="ATP-grasp 1" evidence="1">
    <location>
        <begin position="133"/>
        <end position="327"/>
    </location>
</feature>
<feature type="domain" description="ATP-grasp 2" evidence="1">
    <location>
        <begin position="671"/>
        <end position="861"/>
    </location>
</feature>
<feature type="domain" description="MGS-like" evidence="1">
    <location>
        <begin position="930"/>
        <end position="1058"/>
    </location>
</feature>
<feature type="region of interest" description="Carboxyphosphate synthetic domain" evidence="1">
    <location>
        <begin position="1"/>
        <end position="401"/>
    </location>
</feature>
<feature type="region of interest" description="Oligomerization domain" evidence="1">
    <location>
        <begin position="402"/>
        <end position="546"/>
    </location>
</feature>
<feature type="region of interest" description="Carbamoyl phosphate synthetic domain" evidence="1">
    <location>
        <begin position="547"/>
        <end position="929"/>
    </location>
</feature>
<feature type="region of interest" description="Allosteric domain" evidence="1">
    <location>
        <begin position="930"/>
        <end position="1058"/>
    </location>
</feature>
<feature type="binding site" evidence="1">
    <location>
        <position position="129"/>
    </location>
    <ligand>
        <name>ATP</name>
        <dbReference type="ChEBI" id="CHEBI:30616"/>
        <label>1</label>
    </ligand>
</feature>
<feature type="binding site" evidence="1">
    <location>
        <position position="169"/>
    </location>
    <ligand>
        <name>ATP</name>
        <dbReference type="ChEBI" id="CHEBI:30616"/>
        <label>1</label>
    </ligand>
</feature>
<feature type="binding site" evidence="1">
    <location>
        <position position="175"/>
    </location>
    <ligand>
        <name>ATP</name>
        <dbReference type="ChEBI" id="CHEBI:30616"/>
        <label>1</label>
    </ligand>
</feature>
<feature type="binding site" evidence="1">
    <location>
        <position position="176"/>
    </location>
    <ligand>
        <name>ATP</name>
        <dbReference type="ChEBI" id="CHEBI:30616"/>
        <label>1</label>
    </ligand>
</feature>
<feature type="binding site" evidence="1">
    <location>
        <position position="208"/>
    </location>
    <ligand>
        <name>ATP</name>
        <dbReference type="ChEBI" id="CHEBI:30616"/>
        <label>1</label>
    </ligand>
</feature>
<feature type="binding site" evidence="1">
    <location>
        <position position="210"/>
    </location>
    <ligand>
        <name>ATP</name>
        <dbReference type="ChEBI" id="CHEBI:30616"/>
        <label>1</label>
    </ligand>
</feature>
<feature type="binding site" evidence="1">
    <location>
        <position position="215"/>
    </location>
    <ligand>
        <name>ATP</name>
        <dbReference type="ChEBI" id="CHEBI:30616"/>
        <label>1</label>
    </ligand>
</feature>
<feature type="binding site" evidence="1">
    <location>
        <position position="241"/>
    </location>
    <ligand>
        <name>ATP</name>
        <dbReference type="ChEBI" id="CHEBI:30616"/>
        <label>1</label>
    </ligand>
</feature>
<feature type="binding site" evidence="1">
    <location>
        <position position="242"/>
    </location>
    <ligand>
        <name>ATP</name>
        <dbReference type="ChEBI" id="CHEBI:30616"/>
        <label>1</label>
    </ligand>
</feature>
<feature type="binding site" evidence="1">
    <location>
        <position position="243"/>
    </location>
    <ligand>
        <name>ATP</name>
        <dbReference type="ChEBI" id="CHEBI:30616"/>
        <label>1</label>
    </ligand>
</feature>
<feature type="binding site" evidence="1">
    <location>
        <position position="284"/>
    </location>
    <ligand>
        <name>ATP</name>
        <dbReference type="ChEBI" id="CHEBI:30616"/>
        <label>1</label>
    </ligand>
</feature>
<feature type="binding site" evidence="1">
    <location>
        <position position="284"/>
    </location>
    <ligand>
        <name>Mg(2+)</name>
        <dbReference type="ChEBI" id="CHEBI:18420"/>
        <label>1</label>
    </ligand>
</feature>
<feature type="binding site" evidence="1">
    <location>
        <position position="284"/>
    </location>
    <ligand>
        <name>Mn(2+)</name>
        <dbReference type="ChEBI" id="CHEBI:29035"/>
        <label>1</label>
    </ligand>
</feature>
<feature type="binding site" evidence="1">
    <location>
        <position position="298"/>
    </location>
    <ligand>
        <name>ATP</name>
        <dbReference type="ChEBI" id="CHEBI:30616"/>
        <label>1</label>
    </ligand>
</feature>
<feature type="binding site" evidence="1">
    <location>
        <position position="298"/>
    </location>
    <ligand>
        <name>Mg(2+)</name>
        <dbReference type="ChEBI" id="CHEBI:18420"/>
        <label>1</label>
    </ligand>
</feature>
<feature type="binding site" evidence="1">
    <location>
        <position position="298"/>
    </location>
    <ligand>
        <name>Mg(2+)</name>
        <dbReference type="ChEBI" id="CHEBI:18420"/>
        <label>2</label>
    </ligand>
</feature>
<feature type="binding site" evidence="1">
    <location>
        <position position="298"/>
    </location>
    <ligand>
        <name>Mn(2+)</name>
        <dbReference type="ChEBI" id="CHEBI:29035"/>
        <label>1</label>
    </ligand>
</feature>
<feature type="binding site" evidence="1">
    <location>
        <position position="298"/>
    </location>
    <ligand>
        <name>Mn(2+)</name>
        <dbReference type="ChEBI" id="CHEBI:29035"/>
        <label>2</label>
    </ligand>
</feature>
<feature type="binding site" evidence="1">
    <location>
        <position position="300"/>
    </location>
    <ligand>
        <name>Mg(2+)</name>
        <dbReference type="ChEBI" id="CHEBI:18420"/>
        <label>2</label>
    </ligand>
</feature>
<feature type="binding site" evidence="1">
    <location>
        <position position="300"/>
    </location>
    <ligand>
        <name>Mn(2+)</name>
        <dbReference type="ChEBI" id="CHEBI:29035"/>
        <label>2</label>
    </ligand>
</feature>
<feature type="binding site" evidence="1">
    <location>
        <position position="707"/>
    </location>
    <ligand>
        <name>ATP</name>
        <dbReference type="ChEBI" id="CHEBI:30616"/>
        <label>2</label>
    </ligand>
</feature>
<feature type="binding site" evidence="1">
    <location>
        <position position="746"/>
    </location>
    <ligand>
        <name>ATP</name>
        <dbReference type="ChEBI" id="CHEBI:30616"/>
        <label>2</label>
    </ligand>
</feature>
<feature type="binding site" evidence="1">
    <location>
        <position position="748"/>
    </location>
    <ligand>
        <name>ATP</name>
        <dbReference type="ChEBI" id="CHEBI:30616"/>
        <label>2</label>
    </ligand>
</feature>
<feature type="binding site" evidence="1">
    <location>
        <position position="752"/>
    </location>
    <ligand>
        <name>ATP</name>
        <dbReference type="ChEBI" id="CHEBI:30616"/>
        <label>2</label>
    </ligand>
</feature>
<feature type="binding site" evidence="1">
    <location>
        <position position="777"/>
    </location>
    <ligand>
        <name>ATP</name>
        <dbReference type="ChEBI" id="CHEBI:30616"/>
        <label>2</label>
    </ligand>
</feature>
<feature type="binding site" evidence="1">
    <location>
        <position position="778"/>
    </location>
    <ligand>
        <name>ATP</name>
        <dbReference type="ChEBI" id="CHEBI:30616"/>
        <label>2</label>
    </ligand>
</feature>
<feature type="binding site" evidence="1">
    <location>
        <position position="779"/>
    </location>
    <ligand>
        <name>ATP</name>
        <dbReference type="ChEBI" id="CHEBI:30616"/>
        <label>2</label>
    </ligand>
</feature>
<feature type="binding site" evidence="1">
    <location>
        <position position="780"/>
    </location>
    <ligand>
        <name>ATP</name>
        <dbReference type="ChEBI" id="CHEBI:30616"/>
        <label>2</label>
    </ligand>
</feature>
<feature type="binding site" evidence="1">
    <location>
        <position position="820"/>
    </location>
    <ligand>
        <name>ATP</name>
        <dbReference type="ChEBI" id="CHEBI:30616"/>
        <label>2</label>
    </ligand>
</feature>
<feature type="binding site" evidence="1">
    <location>
        <position position="820"/>
    </location>
    <ligand>
        <name>Mg(2+)</name>
        <dbReference type="ChEBI" id="CHEBI:18420"/>
        <label>3</label>
    </ligand>
</feature>
<feature type="binding site" evidence="1">
    <location>
        <position position="820"/>
    </location>
    <ligand>
        <name>Mn(2+)</name>
        <dbReference type="ChEBI" id="CHEBI:29035"/>
        <label>3</label>
    </ligand>
</feature>
<feature type="binding site" evidence="1">
    <location>
        <position position="832"/>
    </location>
    <ligand>
        <name>ATP</name>
        <dbReference type="ChEBI" id="CHEBI:30616"/>
        <label>2</label>
    </ligand>
</feature>
<feature type="binding site" evidence="1">
    <location>
        <position position="832"/>
    </location>
    <ligand>
        <name>Mg(2+)</name>
        <dbReference type="ChEBI" id="CHEBI:18420"/>
        <label>3</label>
    </ligand>
</feature>
<feature type="binding site" evidence="1">
    <location>
        <position position="832"/>
    </location>
    <ligand>
        <name>Mg(2+)</name>
        <dbReference type="ChEBI" id="CHEBI:18420"/>
        <label>4</label>
    </ligand>
</feature>
<feature type="binding site" evidence="1">
    <location>
        <position position="832"/>
    </location>
    <ligand>
        <name>Mn(2+)</name>
        <dbReference type="ChEBI" id="CHEBI:29035"/>
        <label>3</label>
    </ligand>
</feature>
<feature type="binding site" evidence="1">
    <location>
        <position position="832"/>
    </location>
    <ligand>
        <name>Mn(2+)</name>
        <dbReference type="ChEBI" id="CHEBI:29035"/>
        <label>4</label>
    </ligand>
</feature>
<feature type="binding site" evidence="1">
    <location>
        <position position="834"/>
    </location>
    <ligand>
        <name>Mg(2+)</name>
        <dbReference type="ChEBI" id="CHEBI:18420"/>
        <label>4</label>
    </ligand>
</feature>
<feature type="binding site" evidence="1">
    <location>
        <position position="834"/>
    </location>
    <ligand>
        <name>Mn(2+)</name>
        <dbReference type="ChEBI" id="CHEBI:29035"/>
        <label>4</label>
    </ligand>
</feature>
<name>CARB_STRP1</name>
<keyword id="KW-0028">Amino-acid biosynthesis</keyword>
<keyword id="KW-0055">Arginine biosynthesis</keyword>
<keyword id="KW-0067">ATP-binding</keyword>
<keyword id="KW-0436">Ligase</keyword>
<keyword id="KW-0460">Magnesium</keyword>
<keyword id="KW-0464">Manganese</keyword>
<keyword id="KW-0479">Metal-binding</keyword>
<keyword id="KW-0547">Nucleotide-binding</keyword>
<keyword id="KW-0665">Pyrimidine biosynthesis</keyword>
<keyword id="KW-1185">Reference proteome</keyword>
<keyword id="KW-0677">Repeat</keyword>
<protein>
    <recommendedName>
        <fullName evidence="1">Carbamoyl phosphate synthase large chain</fullName>
        <ecNumber evidence="1">6.3.4.16</ecNumber>
        <ecNumber evidence="1">6.3.5.5</ecNumber>
    </recommendedName>
    <alternativeName>
        <fullName evidence="1">Carbamoyl phosphate synthetase ammonia chain</fullName>
    </alternativeName>
</protein>
<evidence type="ECO:0000255" key="1">
    <source>
        <dbReference type="HAMAP-Rule" id="MF_01210"/>
    </source>
</evidence>
<gene>
    <name evidence="1" type="primary">carB</name>
    <name type="ordered locus">SPy_0835</name>
    <name type="ordered locus">M5005_Spy0643</name>
</gene>
<reference key="1">
    <citation type="journal article" date="2001" name="Proc. Natl. Acad. Sci. U.S.A.">
        <title>Complete genome sequence of an M1 strain of Streptococcus pyogenes.</title>
        <authorList>
            <person name="Ferretti J.J."/>
            <person name="McShan W.M."/>
            <person name="Ajdic D.J."/>
            <person name="Savic D.J."/>
            <person name="Savic G."/>
            <person name="Lyon K."/>
            <person name="Primeaux C."/>
            <person name="Sezate S."/>
            <person name="Suvorov A.N."/>
            <person name="Kenton S."/>
            <person name="Lai H.S."/>
            <person name="Lin S.P."/>
            <person name="Qian Y."/>
            <person name="Jia H.G."/>
            <person name="Najar F.Z."/>
            <person name="Ren Q."/>
            <person name="Zhu H."/>
            <person name="Song L."/>
            <person name="White J."/>
            <person name="Yuan X."/>
            <person name="Clifton S.W."/>
            <person name="Roe B.A."/>
            <person name="McLaughlin R.E."/>
        </authorList>
    </citation>
    <scope>NUCLEOTIDE SEQUENCE [LARGE SCALE GENOMIC DNA]</scope>
    <source>
        <strain>ATCC 700294 / SF370 / Serotype M1</strain>
    </source>
</reference>
<reference key="2">
    <citation type="journal article" date="2005" name="J. Infect. Dis.">
        <title>Evolutionary origin and emergence of a highly successful clone of serotype M1 group A Streptococcus involved multiple horizontal gene transfer events.</title>
        <authorList>
            <person name="Sumby P."/>
            <person name="Porcella S.F."/>
            <person name="Madrigal A.G."/>
            <person name="Barbian K.D."/>
            <person name="Virtaneva K."/>
            <person name="Ricklefs S.M."/>
            <person name="Sturdevant D.E."/>
            <person name="Graham M.R."/>
            <person name="Vuopio-Varkila J."/>
            <person name="Hoe N.P."/>
            <person name="Musser J.M."/>
        </authorList>
    </citation>
    <scope>NUCLEOTIDE SEQUENCE [LARGE SCALE GENOMIC DNA]</scope>
    <source>
        <strain>ATCC BAA-947 / MGAS5005 / Serotype M1</strain>
    </source>
</reference>
<accession>Q9A0C6</accession>
<accession>Q48ZF7</accession>
<comment type="function">
    <text evidence="1">Large subunit of the glutamine-dependent carbamoyl phosphate synthetase (CPSase). CPSase catalyzes the formation of carbamoyl phosphate from the ammonia moiety of glutamine, carbonate, and phosphate donated by ATP, constituting the first step of 2 biosynthetic pathways, one leading to arginine and/or urea and the other to pyrimidine nucleotides. The large subunit (synthetase) binds the substrates ammonia (free or transferred from glutamine from the small subunit), hydrogencarbonate and ATP and carries out an ATP-coupled ligase reaction, activating hydrogencarbonate by forming carboxy phosphate which reacts with ammonia to form carbamoyl phosphate.</text>
</comment>
<comment type="catalytic activity">
    <reaction evidence="1">
        <text>hydrogencarbonate + L-glutamine + 2 ATP + H2O = carbamoyl phosphate + L-glutamate + 2 ADP + phosphate + 2 H(+)</text>
        <dbReference type="Rhea" id="RHEA:18633"/>
        <dbReference type="ChEBI" id="CHEBI:15377"/>
        <dbReference type="ChEBI" id="CHEBI:15378"/>
        <dbReference type="ChEBI" id="CHEBI:17544"/>
        <dbReference type="ChEBI" id="CHEBI:29985"/>
        <dbReference type="ChEBI" id="CHEBI:30616"/>
        <dbReference type="ChEBI" id="CHEBI:43474"/>
        <dbReference type="ChEBI" id="CHEBI:58228"/>
        <dbReference type="ChEBI" id="CHEBI:58359"/>
        <dbReference type="ChEBI" id="CHEBI:456216"/>
        <dbReference type="EC" id="6.3.5.5"/>
    </reaction>
</comment>
<comment type="catalytic activity">
    <molecule>Carbamoyl phosphate synthase large chain</molecule>
    <reaction evidence="1">
        <text>hydrogencarbonate + NH4(+) + 2 ATP = carbamoyl phosphate + 2 ADP + phosphate + 2 H(+)</text>
        <dbReference type="Rhea" id="RHEA:18029"/>
        <dbReference type="ChEBI" id="CHEBI:15378"/>
        <dbReference type="ChEBI" id="CHEBI:17544"/>
        <dbReference type="ChEBI" id="CHEBI:28938"/>
        <dbReference type="ChEBI" id="CHEBI:30616"/>
        <dbReference type="ChEBI" id="CHEBI:43474"/>
        <dbReference type="ChEBI" id="CHEBI:58228"/>
        <dbReference type="ChEBI" id="CHEBI:456216"/>
        <dbReference type="EC" id="6.3.4.16"/>
    </reaction>
</comment>
<comment type="cofactor">
    <cofactor evidence="1">
        <name>Mg(2+)</name>
        <dbReference type="ChEBI" id="CHEBI:18420"/>
    </cofactor>
    <cofactor evidence="1">
        <name>Mn(2+)</name>
        <dbReference type="ChEBI" id="CHEBI:29035"/>
    </cofactor>
    <text evidence="1">Binds 4 Mg(2+) or Mn(2+) ions per subunit.</text>
</comment>
<comment type="pathway">
    <text evidence="1">Amino-acid biosynthesis; L-arginine biosynthesis; carbamoyl phosphate from bicarbonate: step 1/1.</text>
</comment>
<comment type="pathway">
    <text evidence="1">Pyrimidine metabolism; UMP biosynthesis via de novo pathway; (S)-dihydroorotate from bicarbonate: step 1/3.</text>
</comment>
<comment type="subunit">
    <text evidence="1">Composed of two chains; the small (or glutamine) chain promotes the hydrolysis of glutamine to ammonia, which is used by the large (or ammonia) chain to synthesize carbamoyl phosphate. Tetramer of heterodimers (alpha,beta)4.</text>
</comment>
<comment type="domain">
    <text evidence="1">The large subunit is composed of 2 ATP-grasp domains that are involved in binding the 2 ATP molecules needed for carbamoyl phosphate synthesis. The N-terminal ATP-grasp domain (referred to as the carboxyphosphate synthetic component) catalyzes the ATP-dependent phosphorylation of hydrogencarbonate to carboxyphosphate and the subsequent nucleophilic attack by ammonia to form a carbamate intermediate. The C-terminal ATP-grasp domain (referred to as the carbamoyl phosphate synthetic component) then catalyzes the phosphorylation of carbamate with the second ATP to form the end product carbamoyl phosphate. The reactive and unstable enzyme intermediates are sequentially channeled from one active site to the next through the interior of the protein over a distance of at least 96 A.</text>
</comment>
<comment type="similarity">
    <text evidence="1">Belongs to the CarB family.</text>
</comment>
<dbReference type="EC" id="6.3.4.16" evidence="1"/>
<dbReference type="EC" id="6.3.5.5" evidence="1"/>
<dbReference type="EMBL" id="AE004092">
    <property type="protein sequence ID" value="AAK33765.1"/>
    <property type="molecule type" value="Genomic_DNA"/>
</dbReference>
<dbReference type="EMBL" id="CP000017">
    <property type="protein sequence ID" value="AAZ51261.1"/>
    <property type="molecule type" value="Genomic_DNA"/>
</dbReference>
<dbReference type="RefSeq" id="NP_269044.1">
    <property type="nucleotide sequence ID" value="NC_002737.2"/>
</dbReference>
<dbReference type="SMR" id="Q9A0C6"/>
<dbReference type="PaxDb" id="1314-HKU360_00657"/>
<dbReference type="KEGG" id="spy:SPy_0835"/>
<dbReference type="KEGG" id="spz:M5005_Spy0643"/>
<dbReference type="PATRIC" id="fig|160490.10.peg.713"/>
<dbReference type="HOGENOM" id="CLU_000513_1_0_9"/>
<dbReference type="OMA" id="FPFNKFP"/>
<dbReference type="UniPathway" id="UPA00068">
    <property type="reaction ID" value="UER00171"/>
</dbReference>
<dbReference type="UniPathway" id="UPA00070">
    <property type="reaction ID" value="UER00115"/>
</dbReference>
<dbReference type="Proteomes" id="UP000000750">
    <property type="component" value="Chromosome"/>
</dbReference>
<dbReference type="GO" id="GO:0005737">
    <property type="term" value="C:cytoplasm"/>
    <property type="evidence" value="ECO:0007669"/>
    <property type="project" value="TreeGrafter"/>
</dbReference>
<dbReference type="GO" id="GO:0005524">
    <property type="term" value="F:ATP binding"/>
    <property type="evidence" value="ECO:0007669"/>
    <property type="project" value="UniProtKB-UniRule"/>
</dbReference>
<dbReference type="GO" id="GO:0004087">
    <property type="term" value="F:carbamoyl-phosphate synthase (ammonia) activity"/>
    <property type="evidence" value="ECO:0007669"/>
    <property type="project" value="RHEA"/>
</dbReference>
<dbReference type="GO" id="GO:0004088">
    <property type="term" value="F:carbamoyl-phosphate synthase (glutamine-hydrolyzing) activity"/>
    <property type="evidence" value="ECO:0007669"/>
    <property type="project" value="UniProtKB-UniRule"/>
</dbReference>
<dbReference type="GO" id="GO:0046872">
    <property type="term" value="F:metal ion binding"/>
    <property type="evidence" value="ECO:0007669"/>
    <property type="project" value="UniProtKB-KW"/>
</dbReference>
<dbReference type="GO" id="GO:0044205">
    <property type="term" value="P:'de novo' UMP biosynthetic process"/>
    <property type="evidence" value="ECO:0007669"/>
    <property type="project" value="UniProtKB-UniRule"/>
</dbReference>
<dbReference type="GO" id="GO:0006541">
    <property type="term" value="P:glutamine metabolic process"/>
    <property type="evidence" value="ECO:0007669"/>
    <property type="project" value="TreeGrafter"/>
</dbReference>
<dbReference type="GO" id="GO:0006526">
    <property type="term" value="P:L-arginine biosynthetic process"/>
    <property type="evidence" value="ECO:0007669"/>
    <property type="project" value="UniProtKB-UniRule"/>
</dbReference>
<dbReference type="CDD" id="cd01424">
    <property type="entry name" value="MGS_CPS_II"/>
    <property type="match status" value="1"/>
</dbReference>
<dbReference type="FunFam" id="1.10.1030.10:FF:000002">
    <property type="entry name" value="Carbamoyl-phosphate synthase large chain"/>
    <property type="match status" value="1"/>
</dbReference>
<dbReference type="FunFam" id="3.30.1490.20:FF:000001">
    <property type="entry name" value="Carbamoyl-phosphate synthase large chain"/>
    <property type="match status" value="1"/>
</dbReference>
<dbReference type="FunFam" id="3.30.470.20:FF:000001">
    <property type="entry name" value="Carbamoyl-phosphate synthase large chain"/>
    <property type="match status" value="1"/>
</dbReference>
<dbReference type="FunFam" id="3.30.470.20:FF:000026">
    <property type="entry name" value="Carbamoyl-phosphate synthase large chain"/>
    <property type="match status" value="1"/>
</dbReference>
<dbReference type="FunFam" id="3.40.50.20:FF:000001">
    <property type="entry name" value="Carbamoyl-phosphate synthase large chain"/>
    <property type="match status" value="2"/>
</dbReference>
<dbReference type="Gene3D" id="3.40.50.20">
    <property type="match status" value="2"/>
</dbReference>
<dbReference type="Gene3D" id="3.30.1490.20">
    <property type="entry name" value="ATP-grasp fold, A domain"/>
    <property type="match status" value="1"/>
</dbReference>
<dbReference type="Gene3D" id="3.30.470.20">
    <property type="entry name" value="ATP-grasp fold, B domain"/>
    <property type="match status" value="2"/>
</dbReference>
<dbReference type="Gene3D" id="1.10.1030.10">
    <property type="entry name" value="Carbamoyl-phosphate synthetase, large subunit oligomerisation domain"/>
    <property type="match status" value="1"/>
</dbReference>
<dbReference type="Gene3D" id="3.40.50.1380">
    <property type="entry name" value="Methylglyoxal synthase-like domain"/>
    <property type="match status" value="1"/>
</dbReference>
<dbReference type="HAMAP" id="MF_01210_A">
    <property type="entry name" value="CPSase_L_chain_A"/>
    <property type="match status" value="1"/>
</dbReference>
<dbReference type="HAMAP" id="MF_01210_B">
    <property type="entry name" value="CPSase_L_chain_B"/>
    <property type="match status" value="1"/>
</dbReference>
<dbReference type="InterPro" id="IPR011761">
    <property type="entry name" value="ATP-grasp"/>
</dbReference>
<dbReference type="InterPro" id="IPR013815">
    <property type="entry name" value="ATP_grasp_subdomain_1"/>
</dbReference>
<dbReference type="InterPro" id="IPR006275">
    <property type="entry name" value="CarbamoylP_synth_lsu"/>
</dbReference>
<dbReference type="InterPro" id="IPR005480">
    <property type="entry name" value="CarbamoylP_synth_lsu_oligo"/>
</dbReference>
<dbReference type="InterPro" id="IPR036897">
    <property type="entry name" value="CarbamoylP_synth_lsu_oligo_sf"/>
</dbReference>
<dbReference type="InterPro" id="IPR005479">
    <property type="entry name" value="CbamoylP_synth_lsu-like_ATP-bd"/>
</dbReference>
<dbReference type="InterPro" id="IPR005483">
    <property type="entry name" value="CbamoylP_synth_lsu_CPSase_dom"/>
</dbReference>
<dbReference type="InterPro" id="IPR011607">
    <property type="entry name" value="MGS-like_dom"/>
</dbReference>
<dbReference type="InterPro" id="IPR036914">
    <property type="entry name" value="MGS-like_dom_sf"/>
</dbReference>
<dbReference type="InterPro" id="IPR033937">
    <property type="entry name" value="MGS_CPS_CarB"/>
</dbReference>
<dbReference type="InterPro" id="IPR016185">
    <property type="entry name" value="PreATP-grasp_dom_sf"/>
</dbReference>
<dbReference type="NCBIfam" id="TIGR01369">
    <property type="entry name" value="CPSaseII_lrg"/>
    <property type="match status" value="1"/>
</dbReference>
<dbReference type="NCBIfam" id="NF003671">
    <property type="entry name" value="PRK05294.1"/>
    <property type="match status" value="1"/>
</dbReference>
<dbReference type="NCBIfam" id="NF009455">
    <property type="entry name" value="PRK12815.1"/>
    <property type="match status" value="1"/>
</dbReference>
<dbReference type="PANTHER" id="PTHR11405:SF53">
    <property type="entry name" value="CARBAMOYL-PHOSPHATE SYNTHASE [AMMONIA], MITOCHONDRIAL"/>
    <property type="match status" value="1"/>
</dbReference>
<dbReference type="PANTHER" id="PTHR11405">
    <property type="entry name" value="CARBAMOYLTRANSFERASE FAMILY MEMBER"/>
    <property type="match status" value="1"/>
</dbReference>
<dbReference type="Pfam" id="PF02786">
    <property type="entry name" value="CPSase_L_D2"/>
    <property type="match status" value="2"/>
</dbReference>
<dbReference type="Pfam" id="PF02787">
    <property type="entry name" value="CPSase_L_D3"/>
    <property type="match status" value="1"/>
</dbReference>
<dbReference type="Pfam" id="PF02142">
    <property type="entry name" value="MGS"/>
    <property type="match status" value="1"/>
</dbReference>
<dbReference type="PRINTS" id="PR00098">
    <property type="entry name" value="CPSASE"/>
</dbReference>
<dbReference type="SMART" id="SM01096">
    <property type="entry name" value="CPSase_L_D3"/>
    <property type="match status" value="1"/>
</dbReference>
<dbReference type="SMART" id="SM01209">
    <property type="entry name" value="GARS_A"/>
    <property type="match status" value="1"/>
</dbReference>
<dbReference type="SMART" id="SM00851">
    <property type="entry name" value="MGS"/>
    <property type="match status" value="1"/>
</dbReference>
<dbReference type="SUPFAM" id="SSF48108">
    <property type="entry name" value="Carbamoyl phosphate synthetase, large subunit connection domain"/>
    <property type="match status" value="1"/>
</dbReference>
<dbReference type="SUPFAM" id="SSF56059">
    <property type="entry name" value="Glutathione synthetase ATP-binding domain-like"/>
    <property type="match status" value="2"/>
</dbReference>
<dbReference type="SUPFAM" id="SSF52335">
    <property type="entry name" value="Methylglyoxal synthase-like"/>
    <property type="match status" value="1"/>
</dbReference>
<dbReference type="SUPFAM" id="SSF52440">
    <property type="entry name" value="PreATP-grasp domain"/>
    <property type="match status" value="2"/>
</dbReference>
<dbReference type="PROSITE" id="PS50975">
    <property type="entry name" value="ATP_GRASP"/>
    <property type="match status" value="2"/>
</dbReference>
<dbReference type="PROSITE" id="PS00866">
    <property type="entry name" value="CPSASE_1"/>
    <property type="match status" value="2"/>
</dbReference>
<dbReference type="PROSITE" id="PS00867">
    <property type="entry name" value="CPSASE_2"/>
    <property type="match status" value="2"/>
</dbReference>
<dbReference type="PROSITE" id="PS51855">
    <property type="entry name" value="MGS"/>
    <property type="match status" value="1"/>
</dbReference>